<proteinExistence type="inferred from homology"/>
<name>ATPB_FRATF</name>
<reference key="1">
    <citation type="journal article" date="2009" name="PLoS ONE">
        <title>Complete genome sequence of Francisella tularensis subspecies holarctica FTNF002-00.</title>
        <authorList>
            <person name="Barabote R.D."/>
            <person name="Xie G."/>
            <person name="Brettin T.S."/>
            <person name="Hinrichs S.H."/>
            <person name="Fey P.D."/>
            <person name="Jay J.J."/>
            <person name="Engle J.L."/>
            <person name="Godbole S.D."/>
            <person name="Noronha J.M."/>
            <person name="Scheuermann R.H."/>
            <person name="Zhou L.W."/>
            <person name="Lion C."/>
            <person name="Dempsey M.P."/>
        </authorList>
    </citation>
    <scope>NUCLEOTIDE SEQUENCE [LARGE SCALE GENOMIC DNA]</scope>
    <source>
        <strain>FTNF002-00 / FTA</strain>
    </source>
</reference>
<keyword id="KW-0066">ATP synthesis</keyword>
<keyword id="KW-0067">ATP-binding</keyword>
<keyword id="KW-0997">Cell inner membrane</keyword>
<keyword id="KW-1003">Cell membrane</keyword>
<keyword id="KW-0139">CF(1)</keyword>
<keyword id="KW-0375">Hydrogen ion transport</keyword>
<keyword id="KW-0406">Ion transport</keyword>
<keyword id="KW-0472">Membrane</keyword>
<keyword id="KW-0547">Nucleotide-binding</keyword>
<keyword id="KW-1278">Translocase</keyword>
<keyword id="KW-0813">Transport</keyword>
<protein>
    <recommendedName>
        <fullName evidence="1">ATP synthase subunit beta</fullName>
        <ecNumber evidence="1">7.1.2.2</ecNumber>
    </recommendedName>
    <alternativeName>
        <fullName evidence="1">ATP synthase F1 sector subunit beta</fullName>
    </alternativeName>
    <alternativeName>
        <fullName evidence="1">F-ATPase subunit beta</fullName>
    </alternativeName>
</protein>
<gene>
    <name evidence="1" type="primary">atpD</name>
    <name type="ordered locus">FTA_1902</name>
</gene>
<organism>
    <name type="scientific">Francisella tularensis subsp. holarctica (strain FTNF002-00 / FTA)</name>
    <dbReference type="NCBI Taxonomy" id="458234"/>
    <lineage>
        <taxon>Bacteria</taxon>
        <taxon>Pseudomonadati</taxon>
        <taxon>Pseudomonadota</taxon>
        <taxon>Gammaproteobacteria</taxon>
        <taxon>Thiotrichales</taxon>
        <taxon>Francisellaceae</taxon>
        <taxon>Francisella</taxon>
    </lineage>
</organism>
<feature type="chain" id="PRO_1000055112" description="ATP synthase subunit beta">
    <location>
        <begin position="1"/>
        <end position="458"/>
    </location>
</feature>
<feature type="binding site" evidence="1">
    <location>
        <begin position="148"/>
        <end position="155"/>
    </location>
    <ligand>
        <name>ATP</name>
        <dbReference type="ChEBI" id="CHEBI:30616"/>
    </ligand>
</feature>
<sequence>MSTGKIIQVIGAVIDVEFARDNTPKVYDALNVVEAGLVLEVQQQIGDGVVRTIAMGSSDGLRRGMEVKNTNAPISVPVGHGTLGRIMNVLGEPIDEAGPIEYTEKRSIHQAPPAYDELALSTEILETGIKVVDLICPFAKGGKVGLFGGAGVGKTVTMMELINNIAKEHSGYSVFSGVGERTREGNDFYYEMKYSNVLDKVSLVYGQMNEPPGNRLRVALSGLTIAEGFRDEKRDVLMFIDNIYRYTLAGTEVSALLGRMPSAVGYQPTLAAEMGALQERITSTKTGSITSVQAVYVPADDLTDPSPATTFSHLDATIVLSRQIAELGIYPAVDPLDSTSRQLDPLVVGQDHYETARAVQKVLQRYKELKDIIAILGMDELSDEDKKIVDRARKIQRFLSQPFHVAEVFTGNPGKFVSLKDTVASFKAIVNGEYDHLPEQAFYMVGSIQEAIEKAKTL</sequence>
<evidence type="ECO:0000255" key="1">
    <source>
        <dbReference type="HAMAP-Rule" id="MF_01347"/>
    </source>
</evidence>
<comment type="function">
    <text evidence="1">Produces ATP from ADP in the presence of a proton gradient across the membrane. The catalytic sites are hosted primarily by the beta subunits.</text>
</comment>
<comment type="catalytic activity">
    <reaction evidence="1">
        <text>ATP + H2O + 4 H(+)(in) = ADP + phosphate + 5 H(+)(out)</text>
        <dbReference type="Rhea" id="RHEA:57720"/>
        <dbReference type="ChEBI" id="CHEBI:15377"/>
        <dbReference type="ChEBI" id="CHEBI:15378"/>
        <dbReference type="ChEBI" id="CHEBI:30616"/>
        <dbReference type="ChEBI" id="CHEBI:43474"/>
        <dbReference type="ChEBI" id="CHEBI:456216"/>
        <dbReference type="EC" id="7.1.2.2"/>
    </reaction>
</comment>
<comment type="subunit">
    <text evidence="1">F-type ATPases have 2 components, CF(1) - the catalytic core - and CF(0) - the membrane proton channel. CF(1) has five subunits: alpha(3), beta(3), gamma(1), delta(1), epsilon(1). CF(0) has three main subunits: a(1), b(2) and c(9-12). The alpha and beta chains form an alternating ring which encloses part of the gamma chain. CF(1) is attached to CF(0) by a central stalk formed by the gamma and epsilon chains, while a peripheral stalk is formed by the delta and b chains.</text>
</comment>
<comment type="subcellular location">
    <subcellularLocation>
        <location evidence="1">Cell inner membrane</location>
        <topology evidence="1">Peripheral membrane protein</topology>
    </subcellularLocation>
</comment>
<comment type="similarity">
    <text evidence="1">Belongs to the ATPase alpha/beta chains family.</text>
</comment>
<dbReference type="EC" id="7.1.2.2" evidence="1"/>
<dbReference type="EMBL" id="CP000803">
    <property type="protein sequence ID" value="ABU62377.1"/>
    <property type="molecule type" value="Genomic_DNA"/>
</dbReference>
<dbReference type="RefSeq" id="WP_003017334.1">
    <property type="nucleotide sequence ID" value="NC_009749.1"/>
</dbReference>
<dbReference type="SMR" id="A7NEH4"/>
<dbReference type="KEGG" id="fta:FTA_1902"/>
<dbReference type="HOGENOM" id="CLU_022398_0_2_6"/>
<dbReference type="GO" id="GO:0005886">
    <property type="term" value="C:plasma membrane"/>
    <property type="evidence" value="ECO:0007669"/>
    <property type="project" value="UniProtKB-SubCell"/>
</dbReference>
<dbReference type="GO" id="GO:0045259">
    <property type="term" value="C:proton-transporting ATP synthase complex"/>
    <property type="evidence" value="ECO:0007669"/>
    <property type="project" value="UniProtKB-KW"/>
</dbReference>
<dbReference type="GO" id="GO:0005524">
    <property type="term" value="F:ATP binding"/>
    <property type="evidence" value="ECO:0007669"/>
    <property type="project" value="UniProtKB-UniRule"/>
</dbReference>
<dbReference type="GO" id="GO:0016887">
    <property type="term" value="F:ATP hydrolysis activity"/>
    <property type="evidence" value="ECO:0007669"/>
    <property type="project" value="InterPro"/>
</dbReference>
<dbReference type="GO" id="GO:0046933">
    <property type="term" value="F:proton-transporting ATP synthase activity, rotational mechanism"/>
    <property type="evidence" value="ECO:0007669"/>
    <property type="project" value="UniProtKB-UniRule"/>
</dbReference>
<dbReference type="CDD" id="cd18110">
    <property type="entry name" value="ATP-synt_F1_beta_C"/>
    <property type="match status" value="1"/>
</dbReference>
<dbReference type="CDD" id="cd18115">
    <property type="entry name" value="ATP-synt_F1_beta_N"/>
    <property type="match status" value="1"/>
</dbReference>
<dbReference type="CDD" id="cd01133">
    <property type="entry name" value="F1-ATPase_beta_CD"/>
    <property type="match status" value="1"/>
</dbReference>
<dbReference type="FunFam" id="1.10.1140.10:FF:000001">
    <property type="entry name" value="ATP synthase subunit beta"/>
    <property type="match status" value="1"/>
</dbReference>
<dbReference type="FunFam" id="2.40.10.170:FF:000003">
    <property type="entry name" value="ATP synthase subunit beta"/>
    <property type="match status" value="1"/>
</dbReference>
<dbReference type="FunFam" id="3.40.50.300:FF:000004">
    <property type="entry name" value="ATP synthase subunit beta"/>
    <property type="match status" value="1"/>
</dbReference>
<dbReference type="Gene3D" id="2.40.10.170">
    <property type="match status" value="1"/>
</dbReference>
<dbReference type="Gene3D" id="1.10.1140.10">
    <property type="entry name" value="Bovine Mitochondrial F1-atpase, Atp Synthase Beta Chain, Chain D, domain 3"/>
    <property type="match status" value="1"/>
</dbReference>
<dbReference type="Gene3D" id="3.40.50.300">
    <property type="entry name" value="P-loop containing nucleotide triphosphate hydrolases"/>
    <property type="match status" value="1"/>
</dbReference>
<dbReference type="HAMAP" id="MF_01347">
    <property type="entry name" value="ATP_synth_beta_bact"/>
    <property type="match status" value="1"/>
</dbReference>
<dbReference type="InterPro" id="IPR003593">
    <property type="entry name" value="AAA+_ATPase"/>
</dbReference>
<dbReference type="InterPro" id="IPR055190">
    <property type="entry name" value="ATP-synt_VA_C"/>
</dbReference>
<dbReference type="InterPro" id="IPR005722">
    <property type="entry name" value="ATP_synth_F1_bsu"/>
</dbReference>
<dbReference type="InterPro" id="IPR020003">
    <property type="entry name" value="ATPase_a/bsu_AS"/>
</dbReference>
<dbReference type="InterPro" id="IPR050053">
    <property type="entry name" value="ATPase_alpha/beta_chains"/>
</dbReference>
<dbReference type="InterPro" id="IPR004100">
    <property type="entry name" value="ATPase_F1/V1/A1_a/bsu_N"/>
</dbReference>
<dbReference type="InterPro" id="IPR036121">
    <property type="entry name" value="ATPase_F1/V1/A1_a/bsu_N_sf"/>
</dbReference>
<dbReference type="InterPro" id="IPR000194">
    <property type="entry name" value="ATPase_F1/V1/A1_a/bsu_nucl-bd"/>
</dbReference>
<dbReference type="InterPro" id="IPR024034">
    <property type="entry name" value="ATPase_F1/V1_b/a_C"/>
</dbReference>
<dbReference type="InterPro" id="IPR027417">
    <property type="entry name" value="P-loop_NTPase"/>
</dbReference>
<dbReference type="NCBIfam" id="TIGR01039">
    <property type="entry name" value="atpD"/>
    <property type="match status" value="1"/>
</dbReference>
<dbReference type="PANTHER" id="PTHR15184">
    <property type="entry name" value="ATP SYNTHASE"/>
    <property type="match status" value="1"/>
</dbReference>
<dbReference type="PANTHER" id="PTHR15184:SF71">
    <property type="entry name" value="ATP SYNTHASE SUBUNIT BETA, MITOCHONDRIAL"/>
    <property type="match status" value="1"/>
</dbReference>
<dbReference type="Pfam" id="PF00006">
    <property type="entry name" value="ATP-synt_ab"/>
    <property type="match status" value="1"/>
</dbReference>
<dbReference type="Pfam" id="PF02874">
    <property type="entry name" value="ATP-synt_ab_N"/>
    <property type="match status" value="1"/>
</dbReference>
<dbReference type="Pfam" id="PF22919">
    <property type="entry name" value="ATP-synt_VA_C"/>
    <property type="match status" value="1"/>
</dbReference>
<dbReference type="SMART" id="SM00382">
    <property type="entry name" value="AAA"/>
    <property type="match status" value="1"/>
</dbReference>
<dbReference type="SUPFAM" id="SSF47917">
    <property type="entry name" value="C-terminal domain of alpha and beta subunits of F1 ATP synthase"/>
    <property type="match status" value="1"/>
</dbReference>
<dbReference type="SUPFAM" id="SSF50615">
    <property type="entry name" value="N-terminal domain of alpha and beta subunits of F1 ATP synthase"/>
    <property type="match status" value="1"/>
</dbReference>
<dbReference type="SUPFAM" id="SSF52540">
    <property type="entry name" value="P-loop containing nucleoside triphosphate hydrolases"/>
    <property type="match status" value="1"/>
</dbReference>
<dbReference type="PROSITE" id="PS00152">
    <property type="entry name" value="ATPASE_ALPHA_BETA"/>
    <property type="match status" value="1"/>
</dbReference>
<accession>A7NEH4</accession>